<proteinExistence type="inferred from homology"/>
<evidence type="ECO:0000255" key="1">
    <source>
        <dbReference type="HAMAP-Rule" id="MF_00104"/>
    </source>
</evidence>
<dbReference type="EC" id="3.1.26.3" evidence="1"/>
<dbReference type="EMBL" id="CP000884">
    <property type="protein sequence ID" value="ABX37890.1"/>
    <property type="molecule type" value="Genomic_DNA"/>
</dbReference>
<dbReference type="RefSeq" id="WP_012207060.1">
    <property type="nucleotide sequence ID" value="NC_010002.1"/>
</dbReference>
<dbReference type="SMR" id="A9BNJ5"/>
<dbReference type="STRING" id="398578.Daci_5261"/>
<dbReference type="GeneID" id="94690741"/>
<dbReference type="KEGG" id="dac:Daci_5261"/>
<dbReference type="eggNOG" id="COG0571">
    <property type="taxonomic scope" value="Bacteria"/>
</dbReference>
<dbReference type="HOGENOM" id="CLU_000907_1_1_4"/>
<dbReference type="Proteomes" id="UP000000784">
    <property type="component" value="Chromosome"/>
</dbReference>
<dbReference type="GO" id="GO:0005737">
    <property type="term" value="C:cytoplasm"/>
    <property type="evidence" value="ECO:0007669"/>
    <property type="project" value="UniProtKB-SubCell"/>
</dbReference>
<dbReference type="GO" id="GO:0003725">
    <property type="term" value="F:double-stranded RNA binding"/>
    <property type="evidence" value="ECO:0007669"/>
    <property type="project" value="TreeGrafter"/>
</dbReference>
<dbReference type="GO" id="GO:0046872">
    <property type="term" value="F:metal ion binding"/>
    <property type="evidence" value="ECO:0007669"/>
    <property type="project" value="UniProtKB-KW"/>
</dbReference>
<dbReference type="GO" id="GO:0004525">
    <property type="term" value="F:ribonuclease III activity"/>
    <property type="evidence" value="ECO:0007669"/>
    <property type="project" value="UniProtKB-UniRule"/>
</dbReference>
<dbReference type="GO" id="GO:0019843">
    <property type="term" value="F:rRNA binding"/>
    <property type="evidence" value="ECO:0007669"/>
    <property type="project" value="UniProtKB-KW"/>
</dbReference>
<dbReference type="GO" id="GO:0006397">
    <property type="term" value="P:mRNA processing"/>
    <property type="evidence" value="ECO:0007669"/>
    <property type="project" value="UniProtKB-UniRule"/>
</dbReference>
<dbReference type="GO" id="GO:0010468">
    <property type="term" value="P:regulation of gene expression"/>
    <property type="evidence" value="ECO:0007669"/>
    <property type="project" value="TreeGrafter"/>
</dbReference>
<dbReference type="GO" id="GO:0006364">
    <property type="term" value="P:rRNA processing"/>
    <property type="evidence" value="ECO:0007669"/>
    <property type="project" value="UniProtKB-UniRule"/>
</dbReference>
<dbReference type="GO" id="GO:0008033">
    <property type="term" value="P:tRNA processing"/>
    <property type="evidence" value="ECO:0007669"/>
    <property type="project" value="UniProtKB-KW"/>
</dbReference>
<dbReference type="CDD" id="cd10845">
    <property type="entry name" value="DSRM_RNAse_III_family"/>
    <property type="match status" value="1"/>
</dbReference>
<dbReference type="CDD" id="cd00593">
    <property type="entry name" value="RIBOc"/>
    <property type="match status" value="1"/>
</dbReference>
<dbReference type="FunFam" id="1.10.1520.10:FF:000001">
    <property type="entry name" value="Ribonuclease 3"/>
    <property type="match status" value="1"/>
</dbReference>
<dbReference type="FunFam" id="3.30.160.20:FF:000003">
    <property type="entry name" value="Ribonuclease 3"/>
    <property type="match status" value="1"/>
</dbReference>
<dbReference type="Gene3D" id="3.30.160.20">
    <property type="match status" value="1"/>
</dbReference>
<dbReference type="Gene3D" id="1.10.1520.10">
    <property type="entry name" value="Ribonuclease III domain"/>
    <property type="match status" value="1"/>
</dbReference>
<dbReference type="HAMAP" id="MF_00104">
    <property type="entry name" value="RNase_III"/>
    <property type="match status" value="1"/>
</dbReference>
<dbReference type="InterPro" id="IPR014720">
    <property type="entry name" value="dsRBD_dom"/>
</dbReference>
<dbReference type="InterPro" id="IPR011907">
    <property type="entry name" value="RNase_III"/>
</dbReference>
<dbReference type="InterPro" id="IPR000999">
    <property type="entry name" value="RNase_III_dom"/>
</dbReference>
<dbReference type="InterPro" id="IPR036389">
    <property type="entry name" value="RNase_III_sf"/>
</dbReference>
<dbReference type="NCBIfam" id="TIGR02191">
    <property type="entry name" value="RNaseIII"/>
    <property type="match status" value="1"/>
</dbReference>
<dbReference type="PANTHER" id="PTHR11207:SF0">
    <property type="entry name" value="RIBONUCLEASE 3"/>
    <property type="match status" value="1"/>
</dbReference>
<dbReference type="PANTHER" id="PTHR11207">
    <property type="entry name" value="RIBONUCLEASE III"/>
    <property type="match status" value="1"/>
</dbReference>
<dbReference type="Pfam" id="PF00035">
    <property type="entry name" value="dsrm"/>
    <property type="match status" value="1"/>
</dbReference>
<dbReference type="Pfam" id="PF14622">
    <property type="entry name" value="Ribonucleas_3_3"/>
    <property type="match status" value="1"/>
</dbReference>
<dbReference type="SMART" id="SM00358">
    <property type="entry name" value="DSRM"/>
    <property type="match status" value="1"/>
</dbReference>
<dbReference type="SMART" id="SM00535">
    <property type="entry name" value="RIBOc"/>
    <property type="match status" value="1"/>
</dbReference>
<dbReference type="SUPFAM" id="SSF54768">
    <property type="entry name" value="dsRNA-binding domain-like"/>
    <property type="match status" value="1"/>
</dbReference>
<dbReference type="SUPFAM" id="SSF69065">
    <property type="entry name" value="RNase III domain-like"/>
    <property type="match status" value="1"/>
</dbReference>
<dbReference type="PROSITE" id="PS50137">
    <property type="entry name" value="DS_RBD"/>
    <property type="match status" value="1"/>
</dbReference>
<dbReference type="PROSITE" id="PS00517">
    <property type="entry name" value="RNASE_3_1"/>
    <property type="match status" value="1"/>
</dbReference>
<dbReference type="PROSITE" id="PS50142">
    <property type="entry name" value="RNASE_3_2"/>
    <property type="match status" value="1"/>
</dbReference>
<comment type="function">
    <text evidence="1">Digests double-stranded RNA. Involved in the processing of primary rRNA transcript to yield the immediate precursors to the large and small rRNAs (23S and 16S). Processes some mRNAs, and tRNAs when they are encoded in the rRNA operon. Processes pre-crRNA and tracrRNA of type II CRISPR loci if present in the organism.</text>
</comment>
<comment type="catalytic activity">
    <reaction evidence="1">
        <text>Endonucleolytic cleavage to 5'-phosphomonoester.</text>
        <dbReference type="EC" id="3.1.26.3"/>
    </reaction>
</comment>
<comment type="cofactor">
    <cofactor evidence="1">
        <name>Mg(2+)</name>
        <dbReference type="ChEBI" id="CHEBI:18420"/>
    </cofactor>
</comment>
<comment type="subunit">
    <text evidence="1">Homodimer.</text>
</comment>
<comment type="subcellular location">
    <subcellularLocation>
        <location evidence="1">Cytoplasm</location>
    </subcellularLocation>
</comment>
<comment type="similarity">
    <text evidence="1">Belongs to the ribonuclease III family.</text>
</comment>
<name>RNC_DELAS</name>
<keyword id="KW-0963">Cytoplasm</keyword>
<keyword id="KW-0255">Endonuclease</keyword>
<keyword id="KW-0378">Hydrolase</keyword>
<keyword id="KW-0460">Magnesium</keyword>
<keyword id="KW-0479">Metal-binding</keyword>
<keyword id="KW-0507">mRNA processing</keyword>
<keyword id="KW-0540">Nuclease</keyword>
<keyword id="KW-1185">Reference proteome</keyword>
<keyword id="KW-0694">RNA-binding</keyword>
<keyword id="KW-0698">rRNA processing</keyword>
<keyword id="KW-0699">rRNA-binding</keyword>
<keyword id="KW-0819">tRNA processing</keyword>
<reference key="1">
    <citation type="submission" date="2007-11" db="EMBL/GenBank/DDBJ databases">
        <title>Complete sequence of Delftia acidovorans DSM 14801 / SPH-1.</title>
        <authorList>
            <person name="Copeland A."/>
            <person name="Lucas S."/>
            <person name="Lapidus A."/>
            <person name="Barry K."/>
            <person name="Glavina del Rio T."/>
            <person name="Dalin E."/>
            <person name="Tice H."/>
            <person name="Pitluck S."/>
            <person name="Lowry S."/>
            <person name="Clum A."/>
            <person name="Schmutz J."/>
            <person name="Larimer F."/>
            <person name="Land M."/>
            <person name="Hauser L."/>
            <person name="Kyrpides N."/>
            <person name="Kim E."/>
            <person name="Schleheck D."/>
            <person name="Richardson P."/>
        </authorList>
    </citation>
    <scope>NUCLEOTIDE SEQUENCE [LARGE SCALE GENOMIC DNA]</scope>
    <source>
        <strain>DSM 14801 / SPH-1</strain>
    </source>
</reference>
<accession>A9BNJ5</accession>
<protein>
    <recommendedName>
        <fullName evidence="1">Ribonuclease 3</fullName>
        <ecNumber evidence="1">3.1.26.3</ecNumber>
    </recommendedName>
    <alternativeName>
        <fullName evidence="1">Ribonuclease III</fullName>
        <shortName evidence="1">RNase III</shortName>
    </alternativeName>
</protein>
<sequence>MPPLLNALQLRLQHQFAEPALLQRAVTHRSFSADNNERLEFLGDSVLNLAISSLLYQRLSSMPEGDLSRVRANLVKEGTLHQIALRLQLPDLLRLGEGESKSGGKQRPSILADAVEALIGAVYLDAGYAAGEKVVHHLFEGVDINPHMRAAEKDAKTALQEWLQGRRMKLPQYEVVATTGAAHRQTFEVACAIAELQLQARGTGASRRAAEQTAATAMLELLKARHA</sequence>
<feature type="chain" id="PRO_1000094106" description="Ribonuclease 3">
    <location>
        <begin position="1"/>
        <end position="227"/>
    </location>
</feature>
<feature type="domain" description="RNase III" evidence="1">
    <location>
        <begin position="5"/>
        <end position="127"/>
    </location>
</feature>
<feature type="domain" description="DRBM" evidence="1">
    <location>
        <begin position="154"/>
        <end position="224"/>
    </location>
</feature>
<feature type="active site" evidence="1">
    <location>
        <position position="44"/>
    </location>
</feature>
<feature type="active site" evidence="1">
    <location>
        <position position="116"/>
    </location>
</feature>
<feature type="binding site" evidence="1">
    <location>
        <position position="40"/>
    </location>
    <ligand>
        <name>Mg(2+)</name>
        <dbReference type="ChEBI" id="CHEBI:18420"/>
    </ligand>
</feature>
<feature type="binding site" evidence="1">
    <location>
        <position position="113"/>
    </location>
    <ligand>
        <name>Mg(2+)</name>
        <dbReference type="ChEBI" id="CHEBI:18420"/>
    </ligand>
</feature>
<feature type="binding site" evidence="1">
    <location>
        <position position="116"/>
    </location>
    <ligand>
        <name>Mg(2+)</name>
        <dbReference type="ChEBI" id="CHEBI:18420"/>
    </ligand>
</feature>
<gene>
    <name evidence="1" type="primary">rnc</name>
    <name type="ordered locus">Daci_5261</name>
</gene>
<organism>
    <name type="scientific">Delftia acidovorans (strain DSM 14801 / SPH-1)</name>
    <dbReference type="NCBI Taxonomy" id="398578"/>
    <lineage>
        <taxon>Bacteria</taxon>
        <taxon>Pseudomonadati</taxon>
        <taxon>Pseudomonadota</taxon>
        <taxon>Betaproteobacteria</taxon>
        <taxon>Burkholderiales</taxon>
        <taxon>Comamonadaceae</taxon>
        <taxon>Delftia</taxon>
    </lineage>
</organism>